<comment type="function">
    <text evidence="1">Plays an important role in the de novo pathway of purine nucleotide biosynthesis. Catalyzes the first committed step in the biosynthesis of AMP from IMP.</text>
</comment>
<comment type="catalytic activity">
    <reaction evidence="1">
        <text>IMP + L-aspartate + GTP = N(6)-(1,2-dicarboxyethyl)-AMP + GDP + phosphate + 2 H(+)</text>
        <dbReference type="Rhea" id="RHEA:15753"/>
        <dbReference type="ChEBI" id="CHEBI:15378"/>
        <dbReference type="ChEBI" id="CHEBI:29991"/>
        <dbReference type="ChEBI" id="CHEBI:37565"/>
        <dbReference type="ChEBI" id="CHEBI:43474"/>
        <dbReference type="ChEBI" id="CHEBI:57567"/>
        <dbReference type="ChEBI" id="CHEBI:58053"/>
        <dbReference type="ChEBI" id="CHEBI:58189"/>
        <dbReference type="EC" id="6.3.4.4"/>
    </reaction>
</comment>
<comment type="cofactor">
    <cofactor evidence="1">
        <name>Mg(2+)</name>
        <dbReference type="ChEBI" id="CHEBI:18420"/>
    </cofactor>
    <text evidence="1">Binds 1 Mg(2+) ion per subunit.</text>
</comment>
<comment type="pathway">
    <text evidence="1">Purine metabolism; AMP biosynthesis via de novo pathway; AMP from IMP: step 1/2.</text>
</comment>
<comment type="subunit">
    <text evidence="1">Homodimer.</text>
</comment>
<comment type="subcellular location">
    <subcellularLocation>
        <location evidence="1">Cytoplasm</location>
    </subcellularLocation>
</comment>
<comment type="similarity">
    <text evidence="1">Belongs to the adenylosuccinate synthetase family.</text>
</comment>
<reference key="1">
    <citation type="journal article" date="2008" name="Appl. Environ. Microbiol.">
        <title>Genome of the epsilonproteobacterial chemolithoautotroph Sulfurimonas denitrificans.</title>
        <authorList>
            <person name="Sievert S.M."/>
            <person name="Scott K.M."/>
            <person name="Klotz M.G."/>
            <person name="Chain P.S.G."/>
            <person name="Hauser L.J."/>
            <person name="Hemp J."/>
            <person name="Huegler M."/>
            <person name="Land M."/>
            <person name="Lapidus A."/>
            <person name="Larimer F.W."/>
            <person name="Lucas S."/>
            <person name="Malfatti S.A."/>
            <person name="Meyer F."/>
            <person name="Paulsen I.T."/>
            <person name="Ren Q."/>
            <person name="Simon J."/>
            <person name="Bailey K."/>
            <person name="Diaz E."/>
            <person name="Fitzpatrick K.A."/>
            <person name="Glover B."/>
            <person name="Gwatney N."/>
            <person name="Korajkic A."/>
            <person name="Long A."/>
            <person name="Mobberley J.M."/>
            <person name="Pantry S.N."/>
            <person name="Pazder G."/>
            <person name="Peterson S."/>
            <person name="Quintanilla J.D."/>
            <person name="Sprinkle R."/>
            <person name="Stephens J."/>
            <person name="Thomas P."/>
            <person name="Vaughn R."/>
            <person name="Weber M.J."/>
            <person name="Wooten L.L."/>
        </authorList>
    </citation>
    <scope>NUCLEOTIDE SEQUENCE [LARGE SCALE GENOMIC DNA]</scope>
    <source>
        <strain>ATCC 33889 / DSM 1251</strain>
    </source>
</reference>
<keyword id="KW-0963">Cytoplasm</keyword>
<keyword id="KW-0342">GTP-binding</keyword>
<keyword id="KW-0436">Ligase</keyword>
<keyword id="KW-0460">Magnesium</keyword>
<keyword id="KW-0479">Metal-binding</keyword>
<keyword id="KW-0547">Nucleotide-binding</keyword>
<keyword id="KW-0658">Purine biosynthesis</keyword>
<keyword id="KW-1185">Reference proteome</keyword>
<proteinExistence type="inferred from homology"/>
<feature type="chain" id="PRO_0000321810" description="Adenylosuccinate synthetase">
    <location>
        <begin position="1"/>
        <end position="419"/>
    </location>
</feature>
<feature type="active site" description="Proton acceptor" evidence="1">
    <location>
        <position position="16"/>
    </location>
</feature>
<feature type="active site" description="Proton donor" evidence="1">
    <location>
        <position position="44"/>
    </location>
</feature>
<feature type="binding site" evidence="1">
    <location>
        <begin position="15"/>
        <end position="21"/>
    </location>
    <ligand>
        <name>GTP</name>
        <dbReference type="ChEBI" id="CHEBI:37565"/>
    </ligand>
</feature>
<feature type="binding site" description="in other chain" evidence="1">
    <location>
        <begin position="16"/>
        <end position="19"/>
    </location>
    <ligand>
        <name>IMP</name>
        <dbReference type="ChEBI" id="CHEBI:58053"/>
        <note>ligand shared between dimeric partners</note>
    </ligand>
</feature>
<feature type="binding site" evidence="1">
    <location>
        <position position="16"/>
    </location>
    <ligand>
        <name>Mg(2+)</name>
        <dbReference type="ChEBI" id="CHEBI:18420"/>
    </ligand>
</feature>
<feature type="binding site" description="in other chain" evidence="1">
    <location>
        <begin position="41"/>
        <end position="44"/>
    </location>
    <ligand>
        <name>IMP</name>
        <dbReference type="ChEBI" id="CHEBI:58053"/>
        <note>ligand shared between dimeric partners</note>
    </ligand>
</feature>
<feature type="binding site" evidence="1">
    <location>
        <begin position="43"/>
        <end position="45"/>
    </location>
    <ligand>
        <name>GTP</name>
        <dbReference type="ChEBI" id="CHEBI:37565"/>
    </ligand>
</feature>
<feature type="binding site" evidence="1">
    <location>
        <position position="43"/>
    </location>
    <ligand>
        <name>Mg(2+)</name>
        <dbReference type="ChEBI" id="CHEBI:18420"/>
    </ligand>
</feature>
<feature type="binding site" description="in other chain" evidence="1">
    <location>
        <position position="128"/>
    </location>
    <ligand>
        <name>IMP</name>
        <dbReference type="ChEBI" id="CHEBI:58053"/>
        <note>ligand shared between dimeric partners</note>
    </ligand>
</feature>
<feature type="binding site" evidence="1">
    <location>
        <position position="142"/>
    </location>
    <ligand>
        <name>IMP</name>
        <dbReference type="ChEBI" id="CHEBI:58053"/>
        <note>ligand shared between dimeric partners</note>
    </ligand>
</feature>
<feature type="binding site" description="in other chain" evidence="1">
    <location>
        <position position="223"/>
    </location>
    <ligand>
        <name>IMP</name>
        <dbReference type="ChEBI" id="CHEBI:58053"/>
        <note>ligand shared between dimeric partners</note>
    </ligand>
</feature>
<feature type="binding site" description="in other chain" evidence="1">
    <location>
        <position position="238"/>
    </location>
    <ligand>
        <name>IMP</name>
        <dbReference type="ChEBI" id="CHEBI:58053"/>
        <note>ligand shared between dimeric partners</note>
    </ligand>
</feature>
<feature type="binding site" evidence="1">
    <location>
        <begin position="298"/>
        <end position="304"/>
    </location>
    <ligand>
        <name>substrate</name>
    </ligand>
</feature>
<feature type="binding site" description="in other chain" evidence="1">
    <location>
        <position position="302"/>
    </location>
    <ligand>
        <name>IMP</name>
        <dbReference type="ChEBI" id="CHEBI:58053"/>
        <note>ligand shared between dimeric partners</note>
    </ligand>
</feature>
<feature type="binding site" evidence="1">
    <location>
        <position position="304"/>
    </location>
    <ligand>
        <name>GTP</name>
        <dbReference type="ChEBI" id="CHEBI:37565"/>
    </ligand>
</feature>
<feature type="binding site" evidence="1">
    <location>
        <begin position="330"/>
        <end position="332"/>
    </location>
    <ligand>
        <name>GTP</name>
        <dbReference type="ChEBI" id="CHEBI:37565"/>
    </ligand>
</feature>
<feature type="binding site" evidence="1">
    <location>
        <begin position="408"/>
        <end position="410"/>
    </location>
    <ligand>
        <name>GTP</name>
        <dbReference type="ChEBI" id="CHEBI:37565"/>
    </ligand>
</feature>
<evidence type="ECO:0000255" key="1">
    <source>
        <dbReference type="HAMAP-Rule" id="MF_00011"/>
    </source>
</evidence>
<organism>
    <name type="scientific">Sulfurimonas denitrificans (strain ATCC 33889 / DSM 1251)</name>
    <name type="common">Thiomicrospira denitrificans (strain ATCC 33889 / DSM 1251)</name>
    <dbReference type="NCBI Taxonomy" id="326298"/>
    <lineage>
        <taxon>Bacteria</taxon>
        <taxon>Pseudomonadati</taxon>
        <taxon>Campylobacterota</taxon>
        <taxon>Epsilonproteobacteria</taxon>
        <taxon>Campylobacterales</taxon>
        <taxon>Sulfurimonadaceae</taxon>
        <taxon>Sulfurimonas</taxon>
    </lineage>
</organism>
<accession>Q30UH5</accession>
<protein>
    <recommendedName>
        <fullName evidence="1">Adenylosuccinate synthetase</fullName>
        <shortName evidence="1">AMPSase</shortName>
        <shortName evidence="1">AdSS</shortName>
        <ecNumber evidence="1">6.3.4.4</ecNumber>
    </recommendedName>
    <alternativeName>
        <fullName evidence="1">IMP--aspartate ligase</fullName>
    </alternativeName>
</protein>
<gene>
    <name evidence="1" type="primary">purA</name>
    <name type="ordered locus">Suden_0075</name>
</gene>
<sequence length="419" mass="46358">MPSRKADLIVGIQWGDEGKGKIVDRLAKEYDMVCRSQGGHNAGHTIWVDGVRYALHLIPSGILNPKAVNVIGNGVVLSPESIIKEMLQFENLEGRLFISDKAHLNLSYHSLIDQAREKLKGDKAIGTTGKGIGPAYSDKINRVGMRVGELLNPEKLCERIVEHFEQNRDIFAILNINMPNKNELLEELKGYSEKLSPFITDTTQLIWRALDKENKRVLLEGAQGTMLDIDHGTYPYVTSSSTISAGACTGLGINAKDIGKVIGIVKAYCTRVGNGPFPSEDLGKDGKLLGERGHEFGTTTGRARRCGWFDAVACRYASRLNGCDELALMKLDVLDGFDEVKVCVAYELNGAQIDYLPANLDDVKPIYKSFKGWDKTEGARRFEDLPKEAQDYIKIIEEITKTKVGIISTSPEREDTIIL</sequence>
<dbReference type="EC" id="6.3.4.4" evidence="1"/>
<dbReference type="EMBL" id="CP000153">
    <property type="protein sequence ID" value="ABB43356.1"/>
    <property type="molecule type" value="Genomic_DNA"/>
</dbReference>
<dbReference type="RefSeq" id="WP_011371711.1">
    <property type="nucleotide sequence ID" value="NC_007575.1"/>
</dbReference>
<dbReference type="SMR" id="Q30UH5"/>
<dbReference type="STRING" id="326298.Suden_0075"/>
<dbReference type="KEGG" id="tdn:Suden_0075"/>
<dbReference type="eggNOG" id="COG0104">
    <property type="taxonomic scope" value="Bacteria"/>
</dbReference>
<dbReference type="HOGENOM" id="CLU_029848_0_0_7"/>
<dbReference type="OrthoDB" id="9807553at2"/>
<dbReference type="UniPathway" id="UPA00075">
    <property type="reaction ID" value="UER00335"/>
</dbReference>
<dbReference type="Proteomes" id="UP000002714">
    <property type="component" value="Chromosome"/>
</dbReference>
<dbReference type="GO" id="GO:0005737">
    <property type="term" value="C:cytoplasm"/>
    <property type="evidence" value="ECO:0007669"/>
    <property type="project" value="UniProtKB-SubCell"/>
</dbReference>
<dbReference type="GO" id="GO:0004019">
    <property type="term" value="F:adenylosuccinate synthase activity"/>
    <property type="evidence" value="ECO:0007669"/>
    <property type="project" value="UniProtKB-UniRule"/>
</dbReference>
<dbReference type="GO" id="GO:0005525">
    <property type="term" value="F:GTP binding"/>
    <property type="evidence" value="ECO:0007669"/>
    <property type="project" value="UniProtKB-UniRule"/>
</dbReference>
<dbReference type="GO" id="GO:0000287">
    <property type="term" value="F:magnesium ion binding"/>
    <property type="evidence" value="ECO:0007669"/>
    <property type="project" value="UniProtKB-UniRule"/>
</dbReference>
<dbReference type="GO" id="GO:0044208">
    <property type="term" value="P:'de novo' AMP biosynthetic process"/>
    <property type="evidence" value="ECO:0007669"/>
    <property type="project" value="UniProtKB-UniRule"/>
</dbReference>
<dbReference type="GO" id="GO:0046040">
    <property type="term" value="P:IMP metabolic process"/>
    <property type="evidence" value="ECO:0007669"/>
    <property type="project" value="TreeGrafter"/>
</dbReference>
<dbReference type="CDD" id="cd03108">
    <property type="entry name" value="AdSS"/>
    <property type="match status" value="1"/>
</dbReference>
<dbReference type="FunFam" id="1.10.300.10:FF:000001">
    <property type="entry name" value="Adenylosuccinate synthetase"/>
    <property type="match status" value="1"/>
</dbReference>
<dbReference type="FunFam" id="3.90.170.10:FF:000001">
    <property type="entry name" value="Adenylosuccinate synthetase"/>
    <property type="match status" value="1"/>
</dbReference>
<dbReference type="Gene3D" id="3.40.440.10">
    <property type="entry name" value="Adenylosuccinate Synthetase, subunit A, domain 1"/>
    <property type="match status" value="1"/>
</dbReference>
<dbReference type="Gene3D" id="1.10.300.10">
    <property type="entry name" value="Adenylosuccinate Synthetase, subunit A, domain 2"/>
    <property type="match status" value="1"/>
</dbReference>
<dbReference type="Gene3D" id="3.90.170.10">
    <property type="entry name" value="Adenylosuccinate Synthetase, subunit A, domain 3"/>
    <property type="match status" value="1"/>
</dbReference>
<dbReference type="HAMAP" id="MF_00011">
    <property type="entry name" value="Adenylosucc_synth"/>
    <property type="match status" value="1"/>
</dbReference>
<dbReference type="InterPro" id="IPR018220">
    <property type="entry name" value="Adenylosuccin_syn_GTP-bd"/>
</dbReference>
<dbReference type="InterPro" id="IPR033128">
    <property type="entry name" value="Adenylosuccin_syn_Lys_AS"/>
</dbReference>
<dbReference type="InterPro" id="IPR042109">
    <property type="entry name" value="Adenylosuccinate_synth_dom1"/>
</dbReference>
<dbReference type="InterPro" id="IPR042110">
    <property type="entry name" value="Adenylosuccinate_synth_dom2"/>
</dbReference>
<dbReference type="InterPro" id="IPR042111">
    <property type="entry name" value="Adenylosuccinate_synth_dom3"/>
</dbReference>
<dbReference type="InterPro" id="IPR001114">
    <property type="entry name" value="Adenylosuccinate_synthetase"/>
</dbReference>
<dbReference type="InterPro" id="IPR027417">
    <property type="entry name" value="P-loop_NTPase"/>
</dbReference>
<dbReference type="NCBIfam" id="NF002223">
    <property type="entry name" value="PRK01117.1"/>
    <property type="match status" value="1"/>
</dbReference>
<dbReference type="NCBIfam" id="TIGR00184">
    <property type="entry name" value="purA"/>
    <property type="match status" value="1"/>
</dbReference>
<dbReference type="PANTHER" id="PTHR11846">
    <property type="entry name" value="ADENYLOSUCCINATE SYNTHETASE"/>
    <property type="match status" value="1"/>
</dbReference>
<dbReference type="PANTHER" id="PTHR11846:SF0">
    <property type="entry name" value="ADENYLOSUCCINATE SYNTHETASE"/>
    <property type="match status" value="1"/>
</dbReference>
<dbReference type="Pfam" id="PF00709">
    <property type="entry name" value="Adenylsucc_synt"/>
    <property type="match status" value="1"/>
</dbReference>
<dbReference type="SMART" id="SM00788">
    <property type="entry name" value="Adenylsucc_synt"/>
    <property type="match status" value="1"/>
</dbReference>
<dbReference type="SUPFAM" id="SSF52540">
    <property type="entry name" value="P-loop containing nucleoside triphosphate hydrolases"/>
    <property type="match status" value="1"/>
</dbReference>
<dbReference type="PROSITE" id="PS01266">
    <property type="entry name" value="ADENYLOSUCCIN_SYN_1"/>
    <property type="match status" value="1"/>
</dbReference>
<dbReference type="PROSITE" id="PS00513">
    <property type="entry name" value="ADENYLOSUCCIN_SYN_2"/>
    <property type="match status" value="1"/>
</dbReference>
<name>PURA_SULDN</name>